<keyword id="KW-0131">Cell cycle</keyword>
<keyword id="KW-0132">Cell division</keyword>
<keyword id="KW-1003">Cell membrane</keyword>
<keyword id="KW-0133">Cell shape</keyword>
<keyword id="KW-0961">Cell wall biogenesis/degradation</keyword>
<keyword id="KW-0328">Glycosyltransferase</keyword>
<keyword id="KW-0472">Membrane</keyword>
<keyword id="KW-0573">Peptidoglycan synthesis</keyword>
<keyword id="KW-1185">Reference proteome</keyword>
<keyword id="KW-0808">Transferase</keyword>
<sequence>MSWQQAAGYGAGDAMARRAPSVVVAGGGTAGHIEPALALADAVRRLRPDARVTALGTERGLENRLVPARGYPLELVPPVPMPRKPTPELLKLPLKVRESVKRTREVLDRVGADVVVGFGGYVSLPAYLAARGKTPIVVHEANARAGLANKVGAKFAERVLSATPDSGLAGARTIGIPLRESITTLDRAALRAQARAHFGLHPHAPTILVFGGSQGARTLNTAFSGAADALGRAGVGVLHAHGPKNTLAVQQVPGAPVYNAVPYLERMDLAYAAADLVVCRSGAMTVAEVSAVGLPAVFVPLPHGNGEQALNAQPVVSAGGARLVPDEQMTPQRVVEELLPLALDAQRLQEMSRATLSTGHREADRVLAQIVLEVAGR</sequence>
<protein>
    <recommendedName>
        <fullName evidence="1">UDP-N-acetylglucosamine--N-acetylmuramyl-(pentapeptide) pyrophosphoryl-undecaprenol N-acetylglucosamine transferase</fullName>
        <ecNumber evidence="1">2.4.1.227</ecNumber>
    </recommendedName>
    <alternativeName>
        <fullName evidence="1">Undecaprenyl-PP-MurNAc-pentapeptide-UDPGlcNAc GlcNAc transferase</fullName>
    </alternativeName>
</protein>
<organism>
    <name type="scientific">Saccharopolyspora erythraea (strain ATCC 11635 / DSM 40517 / JCM 4748 / NBRC 13426 / NCIMB 8594 / NRRL 2338)</name>
    <dbReference type="NCBI Taxonomy" id="405948"/>
    <lineage>
        <taxon>Bacteria</taxon>
        <taxon>Bacillati</taxon>
        <taxon>Actinomycetota</taxon>
        <taxon>Actinomycetes</taxon>
        <taxon>Pseudonocardiales</taxon>
        <taxon>Pseudonocardiaceae</taxon>
        <taxon>Saccharopolyspora</taxon>
    </lineage>
</organism>
<accession>A4FLW0</accession>
<evidence type="ECO:0000255" key="1">
    <source>
        <dbReference type="HAMAP-Rule" id="MF_00033"/>
    </source>
</evidence>
<name>MURG_SACEN</name>
<gene>
    <name evidence="1" type="primary">murG</name>
    <name type="ordered locus">SACE_5851</name>
</gene>
<dbReference type="EC" id="2.4.1.227" evidence="1"/>
<dbReference type="EMBL" id="AM420293">
    <property type="protein sequence ID" value="CAM05035.1"/>
    <property type="molecule type" value="Genomic_DNA"/>
</dbReference>
<dbReference type="SMR" id="A4FLW0"/>
<dbReference type="STRING" id="405948.SACE_5851"/>
<dbReference type="CAZy" id="GT28">
    <property type="family name" value="Glycosyltransferase Family 28"/>
</dbReference>
<dbReference type="KEGG" id="sen:SACE_5851"/>
<dbReference type="eggNOG" id="COG0707">
    <property type="taxonomic scope" value="Bacteria"/>
</dbReference>
<dbReference type="HOGENOM" id="CLU_037404_1_0_11"/>
<dbReference type="UniPathway" id="UPA00219"/>
<dbReference type="Proteomes" id="UP000006728">
    <property type="component" value="Chromosome"/>
</dbReference>
<dbReference type="GO" id="GO:0005886">
    <property type="term" value="C:plasma membrane"/>
    <property type="evidence" value="ECO:0007669"/>
    <property type="project" value="UniProtKB-SubCell"/>
</dbReference>
<dbReference type="GO" id="GO:0051991">
    <property type="term" value="F:UDP-N-acetyl-D-glucosamine:N-acetylmuramoyl-L-alanyl-D-glutamyl-meso-2,6-diaminopimelyl-D-alanyl-D-alanine-diphosphoundecaprenol 4-beta-N-acetylglucosaminlytransferase activity"/>
    <property type="evidence" value="ECO:0007669"/>
    <property type="project" value="RHEA"/>
</dbReference>
<dbReference type="GO" id="GO:0050511">
    <property type="term" value="F:undecaprenyldiphospho-muramoylpentapeptide beta-N-acetylglucosaminyltransferase activity"/>
    <property type="evidence" value="ECO:0007669"/>
    <property type="project" value="UniProtKB-UniRule"/>
</dbReference>
<dbReference type="GO" id="GO:0005975">
    <property type="term" value="P:carbohydrate metabolic process"/>
    <property type="evidence" value="ECO:0007669"/>
    <property type="project" value="InterPro"/>
</dbReference>
<dbReference type="GO" id="GO:0051301">
    <property type="term" value="P:cell division"/>
    <property type="evidence" value="ECO:0007669"/>
    <property type="project" value="UniProtKB-KW"/>
</dbReference>
<dbReference type="GO" id="GO:0071555">
    <property type="term" value="P:cell wall organization"/>
    <property type="evidence" value="ECO:0007669"/>
    <property type="project" value="UniProtKB-KW"/>
</dbReference>
<dbReference type="GO" id="GO:0030259">
    <property type="term" value="P:lipid glycosylation"/>
    <property type="evidence" value="ECO:0007669"/>
    <property type="project" value="UniProtKB-UniRule"/>
</dbReference>
<dbReference type="GO" id="GO:0009252">
    <property type="term" value="P:peptidoglycan biosynthetic process"/>
    <property type="evidence" value="ECO:0007669"/>
    <property type="project" value="UniProtKB-UniRule"/>
</dbReference>
<dbReference type="GO" id="GO:0008360">
    <property type="term" value="P:regulation of cell shape"/>
    <property type="evidence" value="ECO:0007669"/>
    <property type="project" value="UniProtKB-KW"/>
</dbReference>
<dbReference type="CDD" id="cd03785">
    <property type="entry name" value="GT28_MurG"/>
    <property type="match status" value="1"/>
</dbReference>
<dbReference type="Gene3D" id="3.40.50.2000">
    <property type="entry name" value="Glycogen Phosphorylase B"/>
    <property type="match status" value="2"/>
</dbReference>
<dbReference type="HAMAP" id="MF_00033">
    <property type="entry name" value="MurG"/>
    <property type="match status" value="1"/>
</dbReference>
<dbReference type="InterPro" id="IPR006009">
    <property type="entry name" value="GlcNAc_MurG"/>
</dbReference>
<dbReference type="InterPro" id="IPR007235">
    <property type="entry name" value="Glyco_trans_28_C"/>
</dbReference>
<dbReference type="InterPro" id="IPR004276">
    <property type="entry name" value="GlycoTrans_28_N"/>
</dbReference>
<dbReference type="NCBIfam" id="TIGR01133">
    <property type="entry name" value="murG"/>
    <property type="match status" value="1"/>
</dbReference>
<dbReference type="PANTHER" id="PTHR21015:SF22">
    <property type="entry name" value="GLYCOSYLTRANSFERASE"/>
    <property type="match status" value="1"/>
</dbReference>
<dbReference type="PANTHER" id="PTHR21015">
    <property type="entry name" value="UDP-N-ACETYLGLUCOSAMINE--N-ACETYLMURAMYL-(PENTAPEPTIDE) PYROPHOSPHORYL-UNDECAPRENOL N-ACETYLGLUCOSAMINE TRANSFERASE 1"/>
    <property type="match status" value="1"/>
</dbReference>
<dbReference type="Pfam" id="PF04101">
    <property type="entry name" value="Glyco_tran_28_C"/>
    <property type="match status" value="1"/>
</dbReference>
<dbReference type="Pfam" id="PF03033">
    <property type="entry name" value="Glyco_transf_28"/>
    <property type="match status" value="1"/>
</dbReference>
<dbReference type="SUPFAM" id="SSF53756">
    <property type="entry name" value="UDP-Glycosyltransferase/glycogen phosphorylase"/>
    <property type="match status" value="1"/>
</dbReference>
<reference key="1">
    <citation type="journal article" date="2007" name="Nat. Biotechnol.">
        <title>Complete genome sequence of the erythromycin-producing bacterium Saccharopolyspora erythraea NRRL23338.</title>
        <authorList>
            <person name="Oliynyk M."/>
            <person name="Samborskyy M."/>
            <person name="Lester J.B."/>
            <person name="Mironenko T."/>
            <person name="Scott N."/>
            <person name="Dickens S."/>
            <person name="Haydock S.F."/>
            <person name="Leadlay P.F."/>
        </authorList>
    </citation>
    <scope>NUCLEOTIDE SEQUENCE [LARGE SCALE GENOMIC DNA]</scope>
    <source>
        <strain>ATCC 11635 / DSM 40517 / JCM 4748 / NBRC 13426 / NCIMB 8594 / NRRL 2338</strain>
    </source>
</reference>
<proteinExistence type="inferred from homology"/>
<comment type="function">
    <text evidence="1">Cell wall formation. Catalyzes the transfer of a GlcNAc subunit on undecaprenyl-pyrophosphoryl-MurNAc-pentapeptide (lipid intermediate I) to form undecaprenyl-pyrophosphoryl-MurNAc-(pentapeptide)GlcNAc (lipid intermediate II).</text>
</comment>
<comment type="catalytic activity">
    <reaction evidence="1">
        <text>di-trans,octa-cis-undecaprenyl diphospho-N-acetyl-alpha-D-muramoyl-L-alanyl-D-glutamyl-meso-2,6-diaminopimeloyl-D-alanyl-D-alanine + UDP-N-acetyl-alpha-D-glucosamine = di-trans,octa-cis-undecaprenyl diphospho-[N-acetyl-alpha-D-glucosaminyl-(1-&gt;4)]-N-acetyl-alpha-D-muramoyl-L-alanyl-D-glutamyl-meso-2,6-diaminopimeloyl-D-alanyl-D-alanine + UDP + H(+)</text>
        <dbReference type="Rhea" id="RHEA:31227"/>
        <dbReference type="ChEBI" id="CHEBI:15378"/>
        <dbReference type="ChEBI" id="CHEBI:57705"/>
        <dbReference type="ChEBI" id="CHEBI:58223"/>
        <dbReference type="ChEBI" id="CHEBI:61387"/>
        <dbReference type="ChEBI" id="CHEBI:61388"/>
        <dbReference type="EC" id="2.4.1.227"/>
    </reaction>
</comment>
<comment type="pathway">
    <text evidence="1">Cell wall biogenesis; peptidoglycan biosynthesis.</text>
</comment>
<comment type="subcellular location">
    <subcellularLocation>
        <location evidence="1">Cell membrane</location>
        <topology evidence="1">Peripheral membrane protein</topology>
        <orientation evidence="1">Cytoplasmic side</orientation>
    </subcellularLocation>
</comment>
<comment type="similarity">
    <text evidence="1">Belongs to the glycosyltransferase 28 family. MurG subfamily.</text>
</comment>
<feature type="chain" id="PRO_0000315163" description="UDP-N-acetylglucosamine--N-acetylmuramyl-(pentapeptide) pyrophosphoryl-undecaprenol N-acetylglucosamine transferase">
    <location>
        <begin position="1"/>
        <end position="377"/>
    </location>
</feature>
<feature type="binding site" evidence="1">
    <location>
        <begin position="29"/>
        <end position="31"/>
    </location>
    <ligand>
        <name>UDP-N-acetyl-alpha-D-glucosamine</name>
        <dbReference type="ChEBI" id="CHEBI:57705"/>
    </ligand>
</feature>
<feature type="binding site" evidence="1">
    <location>
        <position position="142"/>
    </location>
    <ligand>
        <name>UDP-N-acetyl-alpha-D-glucosamine</name>
        <dbReference type="ChEBI" id="CHEBI:57705"/>
    </ligand>
</feature>
<feature type="binding site" evidence="1">
    <location>
        <position position="179"/>
    </location>
    <ligand>
        <name>UDP-N-acetyl-alpha-D-glucosamine</name>
        <dbReference type="ChEBI" id="CHEBI:57705"/>
    </ligand>
</feature>
<feature type="binding site" evidence="1">
    <location>
        <position position="213"/>
    </location>
    <ligand>
        <name>UDP-N-acetyl-alpha-D-glucosamine</name>
        <dbReference type="ChEBI" id="CHEBI:57705"/>
    </ligand>
</feature>
<feature type="binding site" evidence="1">
    <location>
        <position position="308"/>
    </location>
    <ligand>
        <name>UDP-N-acetyl-alpha-D-glucosamine</name>
        <dbReference type="ChEBI" id="CHEBI:57705"/>
    </ligand>
</feature>